<reference key="1">
    <citation type="submission" date="2009-07" db="EMBL/GenBank/DDBJ databases">
        <authorList>
            <person name="Kropinski A.M."/>
            <person name="Villegas A."/>
            <person name="Lingohr E.J."/>
        </authorList>
    </citation>
    <scope>NUCLEOTIDE SEQUENCE [GENOMIC DNA]</scope>
</reference>
<reference key="2">
    <citation type="journal article" date="1987" name="Nucleic Acids Res.">
        <title>The right end of transposable bacteriophage D108 contains a 520 base pair protein-encoding sequence not present in bacteriophage Mu.</title>
        <authorList>
            <person name="Szatmari G.B."/>
            <person name="Lapointe M."/>
            <person name="Dubow M.S."/>
        </authorList>
    </citation>
    <scope>NUCLEOTIDE SEQUENCE [GENOMIC DNA] OF 175-197</scope>
</reference>
<organismHost>
    <name type="scientific">Escherichia coli</name>
    <dbReference type="NCBI Taxonomy" id="562"/>
</organismHost>
<gene>
    <name type="primary">gin</name>
</gene>
<proteinExistence type="evidence at transcript level"/>
<dbReference type="EC" id="3.1.22.-"/>
<dbReference type="EC" id="6.5.1.-"/>
<dbReference type="EMBL" id="X05926">
    <property type="protein sequence ID" value="CAA29365.1"/>
    <property type="molecule type" value="Genomic_DNA"/>
</dbReference>
<dbReference type="EMBL" id="GQ357916">
    <property type="protein sequence ID" value="ACV50313.1"/>
    <property type="molecule type" value="Genomic_DNA"/>
</dbReference>
<dbReference type="PIR" id="S07394">
    <property type="entry name" value="S07394"/>
</dbReference>
<dbReference type="RefSeq" id="YP_003335802.1">
    <property type="nucleotide sequence ID" value="NC_013594.1"/>
</dbReference>
<dbReference type="SMR" id="Q38199"/>
<dbReference type="GeneID" id="8658865"/>
<dbReference type="KEGG" id="vg:8658865"/>
<dbReference type="OrthoDB" id="11223at10239"/>
<dbReference type="Proteomes" id="UP000000320">
    <property type="component" value="Genome"/>
</dbReference>
<dbReference type="GO" id="GO:0030430">
    <property type="term" value="C:host cell cytoplasm"/>
    <property type="evidence" value="ECO:0007669"/>
    <property type="project" value="UniProtKB-SubCell"/>
</dbReference>
<dbReference type="GO" id="GO:0003677">
    <property type="term" value="F:DNA binding"/>
    <property type="evidence" value="ECO:0007669"/>
    <property type="project" value="UniProtKB-KW"/>
</dbReference>
<dbReference type="GO" id="GO:0000150">
    <property type="term" value="F:DNA strand exchange activity"/>
    <property type="evidence" value="ECO:0007669"/>
    <property type="project" value="UniProtKB-KW"/>
</dbReference>
<dbReference type="GO" id="GO:0016787">
    <property type="term" value="F:hydrolase activity"/>
    <property type="evidence" value="ECO:0007669"/>
    <property type="project" value="UniProtKB-KW"/>
</dbReference>
<dbReference type="GO" id="GO:0016874">
    <property type="term" value="F:ligase activity"/>
    <property type="evidence" value="ECO:0007669"/>
    <property type="project" value="UniProtKB-KW"/>
</dbReference>
<dbReference type="GO" id="GO:0015074">
    <property type="term" value="P:DNA integration"/>
    <property type="evidence" value="ECO:0007669"/>
    <property type="project" value="UniProtKB-KW"/>
</dbReference>
<dbReference type="CDD" id="cd00569">
    <property type="entry name" value="HTH_Hin_like"/>
    <property type="match status" value="1"/>
</dbReference>
<dbReference type="CDD" id="cd03768">
    <property type="entry name" value="SR_ResInv"/>
    <property type="match status" value="1"/>
</dbReference>
<dbReference type="FunFam" id="3.40.50.1390:FF:000001">
    <property type="entry name" value="DNA recombinase"/>
    <property type="match status" value="1"/>
</dbReference>
<dbReference type="Gene3D" id="1.10.10.60">
    <property type="entry name" value="Homeodomain-like"/>
    <property type="match status" value="1"/>
</dbReference>
<dbReference type="Gene3D" id="3.40.50.1390">
    <property type="entry name" value="Resolvase, N-terminal catalytic domain"/>
    <property type="match status" value="1"/>
</dbReference>
<dbReference type="InterPro" id="IPR009057">
    <property type="entry name" value="Homeodomain-like_sf"/>
</dbReference>
<dbReference type="InterPro" id="IPR006118">
    <property type="entry name" value="Recombinase_CS"/>
</dbReference>
<dbReference type="InterPro" id="IPR006119">
    <property type="entry name" value="Resolv_N"/>
</dbReference>
<dbReference type="InterPro" id="IPR036162">
    <property type="entry name" value="Resolvase-like_N_sf"/>
</dbReference>
<dbReference type="InterPro" id="IPR006120">
    <property type="entry name" value="Resolvase_HTH_dom"/>
</dbReference>
<dbReference type="InterPro" id="IPR050639">
    <property type="entry name" value="SSR_resolvase"/>
</dbReference>
<dbReference type="PANTHER" id="PTHR30461">
    <property type="entry name" value="DNA-INVERTASE FROM LAMBDOID PROPHAGE"/>
    <property type="match status" value="1"/>
</dbReference>
<dbReference type="PANTHER" id="PTHR30461:SF2">
    <property type="entry name" value="SERINE RECOMBINASE PINE-RELATED"/>
    <property type="match status" value="1"/>
</dbReference>
<dbReference type="Pfam" id="PF02796">
    <property type="entry name" value="HTH_7"/>
    <property type="match status" value="1"/>
</dbReference>
<dbReference type="Pfam" id="PF00239">
    <property type="entry name" value="Resolvase"/>
    <property type="match status" value="1"/>
</dbReference>
<dbReference type="SMART" id="SM00857">
    <property type="entry name" value="Resolvase"/>
    <property type="match status" value="1"/>
</dbReference>
<dbReference type="SUPFAM" id="SSF46689">
    <property type="entry name" value="Homeodomain-like"/>
    <property type="match status" value="1"/>
</dbReference>
<dbReference type="SUPFAM" id="SSF53041">
    <property type="entry name" value="Resolvase-like"/>
    <property type="match status" value="1"/>
</dbReference>
<dbReference type="PROSITE" id="PS00397">
    <property type="entry name" value="RECOMBINASES_1"/>
    <property type="match status" value="1"/>
</dbReference>
<dbReference type="PROSITE" id="PS00398">
    <property type="entry name" value="RECOMBINASES_2"/>
    <property type="match status" value="1"/>
</dbReference>
<dbReference type="PROSITE" id="PS51736">
    <property type="entry name" value="RECOMBINASES_3"/>
    <property type="match status" value="1"/>
</dbReference>
<sequence length="197" mass="22309">MLIGYVRVSTNDQNTDLQRNALVCAGCEQIFEDKLSGTRTDRPGLKRALKRLQKGDTLVVWKLDRLGRSMKHLISLVGELRERGINFRSLTDSIDTSSPMGRFFFHVMGALAEMERELIIERTMAGLAAARNKGRIGGRPPKLTKAEWEQAGRLLAQGIPRKQVALIYDVALSTLYKKHPAKRTHIENDDRINQIDR</sequence>
<name>GIN_BPD10</name>
<organism>
    <name type="scientific">Escherichia phage D108</name>
    <name type="common">Bacteriophage D108</name>
    <dbReference type="NCBI Taxonomy" id="665033"/>
    <lineage>
        <taxon>Viruses</taxon>
        <taxon>Duplodnaviria</taxon>
        <taxon>Heunggongvirae</taxon>
        <taxon>Uroviricota</taxon>
        <taxon>Caudoviricetes</taxon>
        <taxon>Muvirus</taxon>
        <taxon>Muvirus mu</taxon>
    </lineage>
</organism>
<comment type="function">
    <text evidence="1">Performs inversion of a viral segment (G-segment) that encodes two alternate pairs of tail fiber proteins thereby modifying the host specificity of the virus. Binds as a dimer to the viral gix sites which are 34-bp palindromic sequences that flank the invertible G-segment. Catalyzes site-specific recombination in the presence of the host factor Fis. Gin dimers bound to each of the gix sites and host factor Fis bound to the enhancer come together to form the synaptic complex. Each Gin monomer introduces a nick and becomes covalently attached to the 5'-phosphate of the DNA, resulting in double-stranded staggered breaks at both recombination sites. A 180 degrees rotation of one of the two Gin dimers followed by religation of the DNA leads to the inversion of the G-segment (By similarity).</text>
</comment>
<comment type="subunit">
    <text evidence="1">Homodimer. During inversion, two dimers associate to form a homotetramer (By similarity).</text>
</comment>
<comment type="subcellular location">
    <subcellularLocation>
        <location evidence="1">Host cytoplasm</location>
    </subcellularLocation>
</comment>
<comment type="induction">
    <text>Expressed in the late phase of the viral replicative cycle. Expression of late genes is activated by the viral late transcription activator C.</text>
</comment>
<comment type="domain">
    <text evidence="1">The dimerization region is in the N-terminus.</text>
</comment>
<comment type="similarity">
    <text evidence="3">Belongs to the site-specific recombinase resolvase family.</text>
</comment>
<feature type="chain" id="PRO_0000196355" description="Serine recombinase gin">
    <location>
        <begin position="1"/>
        <end position="197"/>
    </location>
</feature>
<feature type="domain" description="Resolvase/invertase-type recombinase catalytic" evidence="2">
    <location>
        <begin position="1"/>
        <end position="134"/>
    </location>
</feature>
<feature type="DNA-binding region" description="H-T-H motif">
    <location>
        <begin position="138"/>
        <end position="181"/>
    </location>
</feature>
<feature type="active site" description="O-(5'-phospho-DNA)-serine intermediate" evidence="2">
    <location>
        <position position="9"/>
    </location>
</feature>
<protein>
    <recommendedName>
        <fullName>Serine recombinase gin</fullName>
        <ecNumber>3.1.22.-</ecNumber>
        <ecNumber>6.5.1.-</ecNumber>
    </recommendedName>
    <alternativeName>
        <fullName>G-segment invertase</fullName>
        <shortName>Gin</shortName>
    </alternativeName>
</protein>
<keyword id="KW-0229">DNA integration</keyword>
<keyword id="KW-0230">DNA invertase</keyword>
<keyword id="KW-0233">DNA recombination</keyword>
<keyword id="KW-0238">DNA-binding</keyword>
<keyword id="KW-1035">Host cytoplasm</keyword>
<keyword id="KW-0378">Hydrolase</keyword>
<keyword id="KW-0426">Late protein</keyword>
<keyword id="KW-0436">Ligase</keyword>
<evidence type="ECO:0000250" key="1"/>
<evidence type="ECO:0000255" key="2">
    <source>
        <dbReference type="PROSITE-ProRule" id="PRU01072"/>
    </source>
</evidence>
<evidence type="ECO:0000305" key="3"/>
<accession>Q38199</accession>
<accession>C9DGR2</accession>